<proteinExistence type="inferred from homology"/>
<name>RUVB_KOSOT</name>
<reference key="1">
    <citation type="submission" date="2009-06" db="EMBL/GenBank/DDBJ databases">
        <title>Complete sequence of Thermotogales bacterium TBF 19.5.1.</title>
        <authorList>
            <consortium name="US DOE Joint Genome Institute"/>
            <person name="Lucas S."/>
            <person name="Copeland A."/>
            <person name="Lapidus A."/>
            <person name="Glavina del Rio T."/>
            <person name="Tice H."/>
            <person name="Bruce D."/>
            <person name="Goodwin L."/>
            <person name="Pitluck S."/>
            <person name="Chertkov O."/>
            <person name="Brettin T."/>
            <person name="Detter J.C."/>
            <person name="Han C."/>
            <person name="Schmutz J."/>
            <person name="Larimer F."/>
            <person name="Land M."/>
            <person name="Hauser L."/>
            <person name="Kyrpides N."/>
            <person name="Ovchinnikova G."/>
            <person name="Noll K."/>
        </authorList>
    </citation>
    <scope>NUCLEOTIDE SEQUENCE [LARGE SCALE GENOMIC DNA]</scope>
    <source>
        <strain>ATCC BAA-1733 / DSM 21960 / TBF 19.5.1</strain>
    </source>
</reference>
<sequence>MEERFLTPKDIGEEQLTRTLRPQRLDEYIGQRNVKQRLKISIEAAKVRNEALDHVLLAGPPGLGKTTLAHIIANEMGTNIYVTSGPVIEKQGDLAAILTSLEEGDVLFIDEIHRLGRAIEEILYSAMEDFKLDIMIGKGPSARSIRLDLAPFTLVGATTRSGLIGAPLRNRFGMVLELEFYTPDELKQIIKRSARLLEVKIDDEAAELLASRSRGTPRIANRLLRRVRDLATVDGTGKILSKTVEDAMKIMGIDAEGLDDMDRKILRVLIENYEGGPAGLKAIAASVGIEADTISEVYEPYLLQSGFIVRTNRGRMATKKAYRHLGIARFNGIGPLWDSTGD</sequence>
<evidence type="ECO:0000255" key="1">
    <source>
        <dbReference type="HAMAP-Rule" id="MF_00016"/>
    </source>
</evidence>
<gene>
    <name evidence="1" type="primary">ruvB</name>
    <name type="ordered locus">Kole_0208</name>
</gene>
<protein>
    <recommendedName>
        <fullName evidence="1">Holliday junction branch migration complex subunit RuvB</fullName>
        <ecNumber evidence="1">3.6.4.-</ecNumber>
    </recommendedName>
</protein>
<organism>
    <name type="scientific">Kosmotoga olearia (strain ATCC BAA-1733 / DSM 21960 / TBF 19.5.1)</name>
    <dbReference type="NCBI Taxonomy" id="521045"/>
    <lineage>
        <taxon>Bacteria</taxon>
        <taxon>Thermotogati</taxon>
        <taxon>Thermotogota</taxon>
        <taxon>Thermotogae</taxon>
        <taxon>Kosmotogales</taxon>
        <taxon>Kosmotogaceae</taxon>
        <taxon>Kosmotoga</taxon>
    </lineage>
</organism>
<dbReference type="EC" id="3.6.4.-" evidence="1"/>
<dbReference type="EMBL" id="CP001634">
    <property type="protein sequence ID" value="ACR78933.1"/>
    <property type="molecule type" value="Genomic_DNA"/>
</dbReference>
<dbReference type="RefSeq" id="WP_012744720.1">
    <property type="nucleotide sequence ID" value="NC_012785.1"/>
</dbReference>
<dbReference type="SMR" id="C5CIU4"/>
<dbReference type="STRING" id="521045.Kole_0208"/>
<dbReference type="KEGG" id="kol:Kole_0208"/>
<dbReference type="eggNOG" id="COG2255">
    <property type="taxonomic scope" value="Bacteria"/>
</dbReference>
<dbReference type="HOGENOM" id="CLU_055599_1_0_0"/>
<dbReference type="OrthoDB" id="9804478at2"/>
<dbReference type="Proteomes" id="UP000002382">
    <property type="component" value="Chromosome"/>
</dbReference>
<dbReference type="GO" id="GO:0005737">
    <property type="term" value="C:cytoplasm"/>
    <property type="evidence" value="ECO:0007669"/>
    <property type="project" value="UniProtKB-SubCell"/>
</dbReference>
<dbReference type="GO" id="GO:0048476">
    <property type="term" value="C:Holliday junction resolvase complex"/>
    <property type="evidence" value="ECO:0007669"/>
    <property type="project" value="UniProtKB-UniRule"/>
</dbReference>
<dbReference type="GO" id="GO:0005524">
    <property type="term" value="F:ATP binding"/>
    <property type="evidence" value="ECO:0007669"/>
    <property type="project" value="UniProtKB-UniRule"/>
</dbReference>
<dbReference type="GO" id="GO:0016887">
    <property type="term" value="F:ATP hydrolysis activity"/>
    <property type="evidence" value="ECO:0007669"/>
    <property type="project" value="InterPro"/>
</dbReference>
<dbReference type="GO" id="GO:0000400">
    <property type="term" value="F:four-way junction DNA binding"/>
    <property type="evidence" value="ECO:0007669"/>
    <property type="project" value="UniProtKB-UniRule"/>
</dbReference>
<dbReference type="GO" id="GO:0009378">
    <property type="term" value="F:four-way junction helicase activity"/>
    <property type="evidence" value="ECO:0007669"/>
    <property type="project" value="InterPro"/>
</dbReference>
<dbReference type="GO" id="GO:0006310">
    <property type="term" value="P:DNA recombination"/>
    <property type="evidence" value="ECO:0007669"/>
    <property type="project" value="UniProtKB-UniRule"/>
</dbReference>
<dbReference type="GO" id="GO:0006281">
    <property type="term" value="P:DNA repair"/>
    <property type="evidence" value="ECO:0007669"/>
    <property type="project" value="UniProtKB-UniRule"/>
</dbReference>
<dbReference type="CDD" id="cd00009">
    <property type="entry name" value="AAA"/>
    <property type="match status" value="1"/>
</dbReference>
<dbReference type="Gene3D" id="1.10.8.60">
    <property type="match status" value="1"/>
</dbReference>
<dbReference type="Gene3D" id="3.40.50.300">
    <property type="entry name" value="P-loop containing nucleotide triphosphate hydrolases"/>
    <property type="match status" value="1"/>
</dbReference>
<dbReference type="Gene3D" id="1.10.10.10">
    <property type="entry name" value="Winged helix-like DNA-binding domain superfamily/Winged helix DNA-binding domain"/>
    <property type="match status" value="1"/>
</dbReference>
<dbReference type="HAMAP" id="MF_00016">
    <property type="entry name" value="DNA_HJ_migration_RuvB"/>
    <property type="match status" value="1"/>
</dbReference>
<dbReference type="InterPro" id="IPR003593">
    <property type="entry name" value="AAA+_ATPase"/>
</dbReference>
<dbReference type="InterPro" id="IPR041445">
    <property type="entry name" value="AAA_lid_4"/>
</dbReference>
<dbReference type="InterPro" id="IPR004605">
    <property type="entry name" value="DNA_helicase_Holl-junc_RuvB"/>
</dbReference>
<dbReference type="InterPro" id="IPR027417">
    <property type="entry name" value="P-loop_NTPase"/>
</dbReference>
<dbReference type="InterPro" id="IPR008824">
    <property type="entry name" value="RuvB-like_N"/>
</dbReference>
<dbReference type="InterPro" id="IPR008823">
    <property type="entry name" value="RuvB_C"/>
</dbReference>
<dbReference type="InterPro" id="IPR036388">
    <property type="entry name" value="WH-like_DNA-bd_sf"/>
</dbReference>
<dbReference type="InterPro" id="IPR036390">
    <property type="entry name" value="WH_DNA-bd_sf"/>
</dbReference>
<dbReference type="NCBIfam" id="NF000868">
    <property type="entry name" value="PRK00080.1"/>
    <property type="match status" value="1"/>
</dbReference>
<dbReference type="NCBIfam" id="TIGR00635">
    <property type="entry name" value="ruvB"/>
    <property type="match status" value="1"/>
</dbReference>
<dbReference type="PANTHER" id="PTHR42848">
    <property type="match status" value="1"/>
</dbReference>
<dbReference type="PANTHER" id="PTHR42848:SF1">
    <property type="entry name" value="HOLLIDAY JUNCTION BRANCH MIGRATION COMPLEX SUBUNIT RUVB"/>
    <property type="match status" value="1"/>
</dbReference>
<dbReference type="Pfam" id="PF17864">
    <property type="entry name" value="AAA_lid_4"/>
    <property type="match status" value="1"/>
</dbReference>
<dbReference type="Pfam" id="PF05491">
    <property type="entry name" value="RuvB_C"/>
    <property type="match status" value="1"/>
</dbReference>
<dbReference type="Pfam" id="PF05496">
    <property type="entry name" value="RuvB_N"/>
    <property type="match status" value="1"/>
</dbReference>
<dbReference type="SMART" id="SM00382">
    <property type="entry name" value="AAA"/>
    <property type="match status" value="1"/>
</dbReference>
<dbReference type="SUPFAM" id="SSF52540">
    <property type="entry name" value="P-loop containing nucleoside triphosphate hydrolases"/>
    <property type="match status" value="1"/>
</dbReference>
<dbReference type="SUPFAM" id="SSF46785">
    <property type="entry name" value="Winged helix' DNA-binding domain"/>
    <property type="match status" value="1"/>
</dbReference>
<keyword id="KW-0067">ATP-binding</keyword>
<keyword id="KW-0963">Cytoplasm</keyword>
<keyword id="KW-0227">DNA damage</keyword>
<keyword id="KW-0233">DNA recombination</keyword>
<keyword id="KW-0234">DNA repair</keyword>
<keyword id="KW-0238">DNA-binding</keyword>
<keyword id="KW-0378">Hydrolase</keyword>
<keyword id="KW-0547">Nucleotide-binding</keyword>
<keyword id="KW-1185">Reference proteome</keyword>
<accession>C5CIU4</accession>
<comment type="function">
    <text evidence="1">The RuvA-RuvB-RuvC complex processes Holliday junction (HJ) DNA during genetic recombination and DNA repair, while the RuvA-RuvB complex plays an important role in the rescue of blocked DNA replication forks via replication fork reversal (RFR). RuvA specifically binds to HJ cruciform DNA, conferring on it an open structure. The RuvB hexamer acts as an ATP-dependent pump, pulling dsDNA into and through the RuvAB complex. RuvB forms 2 homohexamers on either side of HJ DNA bound by 1 or 2 RuvA tetramers; 4 subunits per hexamer contact DNA at a time. Coordinated motions by a converter formed by DNA-disengaged RuvB subunits stimulates ATP hydrolysis and nucleotide exchange. Immobilization of the converter enables RuvB to convert the ATP-contained energy into a lever motion, pulling 2 nucleotides of DNA out of the RuvA tetramer per ATP hydrolyzed, thus driving DNA branch migration. The RuvB motors rotate together with the DNA substrate, which together with the progressing nucleotide cycle form the mechanistic basis for DNA recombination by continuous HJ branch migration. Branch migration allows RuvC to scan DNA until it finds its consensus sequence, where it cleaves and resolves cruciform DNA.</text>
</comment>
<comment type="catalytic activity">
    <reaction evidence="1">
        <text>ATP + H2O = ADP + phosphate + H(+)</text>
        <dbReference type="Rhea" id="RHEA:13065"/>
        <dbReference type="ChEBI" id="CHEBI:15377"/>
        <dbReference type="ChEBI" id="CHEBI:15378"/>
        <dbReference type="ChEBI" id="CHEBI:30616"/>
        <dbReference type="ChEBI" id="CHEBI:43474"/>
        <dbReference type="ChEBI" id="CHEBI:456216"/>
    </reaction>
</comment>
<comment type="subunit">
    <text evidence="1">Homohexamer. Forms an RuvA(8)-RuvB(12)-Holliday junction (HJ) complex. HJ DNA is sandwiched between 2 RuvA tetramers; dsDNA enters through RuvA and exits via RuvB. An RuvB hexamer assembles on each DNA strand where it exits the tetramer. Each RuvB hexamer is contacted by two RuvA subunits (via domain III) on 2 adjacent RuvB subunits; this complex drives branch migration. In the full resolvosome a probable DNA-RuvA(4)-RuvB(12)-RuvC(2) complex forms which resolves the HJ.</text>
</comment>
<comment type="subcellular location">
    <subcellularLocation>
        <location evidence="1">Cytoplasm</location>
    </subcellularLocation>
</comment>
<comment type="domain">
    <text evidence="1">Has 3 domains, the large (RuvB-L) and small ATPase (RuvB-S) domains and the C-terminal head (RuvB-H) domain. The head domain binds DNA, while the ATPase domains jointly bind ATP, ADP or are empty depending on the state of the subunit in the translocation cycle. During a single DNA translocation step the structure of each domain remains the same, but their relative positions change.</text>
</comment>
<comment type="similarity">
    <text evidence="1">Belongs to the RuvB family.</text>
</comment>
<feature type="chain" id="PRO_1000201840" description="Holliday junction branch migration complex subunit RuvB">
    <location>
        <begin position="1"/>
        <end position="342"/>
    </location>
</feature>
<feature type="region of interest" description="Large ATPase domain (RuvB-L)" evidence="1">
    <location>
        <begin position="1"/>
        <end position="181"/>
    </location>
</feature>
<feature type="region of interest" description="Small ATPAse domain (RuvB-S)" evidence="1">
    <location>
        <begin position="182"/>
        <end position="252"/>
    </location>
</feature>
<feature type="region of interest" description="Head domain (RuvB-H)" evidence="1">
    <location>
        <begin position="255"/>
        <end position="342"/>
    </location>
</feature>
<feature type="binding site" evidence="1">
    <location>
        <position position="20"/>
    </location>
    <ligand>
        <name>ATP</name>
        <dbReference type="ChEBI" id="CHEBI:30616"/>
    </ligand>
</feature>
<feature type="binding site" evidence="1">
    <location>
        <position position="21"/>
    </location>
    <ligand>
        <name>ATP</name>
        <dbReference type="ChEBI" id="CHEBI:30616"/>
    </ligand>
</feature>
<feature type="binding site" evidence="1">
    <location>
        <position position="62"/>
    </location>
    <ligand>
        <name>ATP</name>
        <dbReference type="ChEBI" id="CHEBI:30616"/>
    </ligand>
</feature>
<feature type="binding site" evidence="1">
    <location>
        <position position="65"/>
    </location>
    <ligand>
        <name>ATP</name>
        <dbReference type="ChEBI" id="CHEBI:30616"/>
    </ligand>
</feature>
<feature type="binding site" evidence="1">
    <location>
        <position position="66"/>
    </location>
    <ligand>
        <name>ATP</name>
        <dbReference type="ChEBI" id="CHEBI:30616"/>
    </ligand>
</feature>
<feature type="binding site" evidence="1">
    <location>
        <position position="66"/>
    </location>
    <ligand>
        <name>Mg(2+)</name>
        <dbReference type="ChEBI" id="CHEBI:18420"/>
    </ligand>
</feature>
<feature type="binding site" evidence="1">
    <location>
        <position position="67"/>
    </location>
    <ligand>
        <name>ATP</name>
        <dbReference type="ChEBI" id="CHEBI:30616"/>
    </ligand>
</feature>
<feature type="binding site" evidence="1">
    <location>
        <begin position="128"/>
        <end position="130"/>
    </location>
    <ligand>
        <name>ATP</name>
        <dbReference type="ChEBI" id="CHEBI:30616"/>
    </ligand>
</feature>
<feature type="binding site" evidence="1">
    <location>
        <position position="171"/>
    </location>
    <ligand>
        <name>ATP</name>
        <dbReference type="ChEBI" id="CHEBI:30616"/>
    </ligand>
</feature>
<feature type="binding site" evidence="1">
    <location>
        <position position="181"/>
    </location>
    <ligand>
        <name>ATP</name>
        <dbReference type="ChEBI" id="CHEBI:30616"/>
    </ligand>
</feature>
<feature type="binding site" evidence="1">
    <location>
        <position position="218"/>
    </location>
    <ligand>
        <name>ATP</name>
        <dbReference type="ChEBI" id="CHEBI:30616"/>
    </ligand>
</feature>
<feature type="binding site" evidence="1">
    <location>
        <position position="310"/>
    </location>
    <ligand>
        <name>DNA</name>
        <dbReference type="ChEBI" id="CHEBI:16991"/>
    </ligand>
</feature>
<feature type="binding site" evidence="1">
    <location>
        <position position="315"/>
    </location>
    <ligand>
        <name>DNA</name>
        <dbReference type="ChEBI" id="CHEBI:16991"/>
    </ligand>
</feature>